<sequence length="190" mass="20380">MRGLRPALSTFLFLLLITGGVYPLLTTALGQWWFPWQANGSLIREGDTVRGSALIGQNFTGNGYFHGRPSATAEMPYNPQASGGSNLAVSNPELDKQIAARVAALRAANPDASTNVPVELVTASASGLDNNITPQAAAWQIPRVAKARNLSVEQLTQLIAKYSQQPLVKYIGQPVVNIVELNLALDKLDE</sequence>
<gene>
    <name evidence="1" type="primary">kdpC</name>
    <name type="ordered locus">c0781</name>
</gene>
<evidence type="ECO:0000255" key="1">
    <source>
        <dbReference type="HAMAP-Rule" id="MF_00276"/>
    </source>
</evidence>
<evidence type="ECO:0000305" key="2"/>
<name>KDPC_ECOL6</name>
<comment type="function">
    <text evidence="1">Part of the high-affinity ATP-driven potassium transport (or Kdp) system, which catalyzes the hydrolysis of ATP coupled with the electrogenic transport of potassium into the cytoplasm. This subunit acts as a catalytic chaperone that increases the ATP-binding affinity of the ATP-hydrolyzing subunit KdpB by the formation of a transient KdpB/KdpC/ATP ternary complex.</text>
</comment>
<comment type="subunit">
    <text evidence="1">The system is composed of three essential subunits: KdpA, KdpB and KdpC.</text>
</comment>
<comment type="subcellular location">
    <subcellularLocation>
        <location evidence="1">Cell inner membrane</location>
        <topology evidence="1">Single-pass membrane protein</topology>
    </subcellularLocation>
</comment>
<comment type="similarity">
    <text evidence="1">Belongs to the KdpC family.</text>
</comment>
<comment type="sequence caution" evidence="2">
    <conflict type="erroneous initiation">
        <sequence resource="EMBL-CDS" id="AAN79254"/>
    </conflict>
</comment>
<keyword id="KW-0067">ATP-binding</keyword>
<keyword id="KW-0997">Cell inner membrane</keyword>
<keyword id="KW-1003">Cell membrane</keyword>
<keyword id="KW-0406">Ion transport</keyword>
<keyword id="KW-0472">Membrane</keyword>
<keyword id="KW-0547">Nucleotide-binding</keyword>
<keyword id="KW-0630">Potassium</keyword>
<keyword id="KW-0633">Potassium transport</keyword>
<keyword id="KW-1185">Reference proteome</keyword>
<keyword id="KW-0812">Transmembrane</keyword>
<keyword id="KW-1133">Transmembrane helix</keyword>
<keyword id="KW-0813">Transport</keyword>
<organism>
    <name type="scientific">Escherichia coli O6:H1 (strain CFT073 / ATCC 700928 / UPEC)</name>
    <dbReference type="NCBI Taxonomy" id="199310"/>
    <lineage>
        <taxon>Bacteria</taxon>
        <taxon>Pseudomonadati</taxon>
        <taxon>Pseudomonadota</taxon>
        <taxon>Gammaproteobacteria</taxon>
        <taxon>Enterobacterales</taxon>
        <taxon>Enterobacteriaceae</taxon>
        <taxon>Escherichia</taxon>
    </lineage>
</organism>
<protein>
    <recommendedName>
        <fullName evidence="1">Potassium-transporting ATPase KdpC subunit</fullName>
    </recommendedName>
    <alternativeName>
        <fullName evidence="1">ATP phosphohydrolase [potassium-transporting] C chain</fullName>
    </alternativeName>
    <alternativeName>
        <fullName evidence="1">Potassium-binding and translocating subunit C</fullName>
    </alternativeName>
    <alternativeName>
        <fullName evidence="1">Potassium-translocating ATPase C chain</fullName>
    </alternativeName>
</protein>
<accession>Q8FJV5</accession>
<feature type="chain" id="PRO_0000196992" description="Potassium-transporting ATPase KdpC subunit">
    <location>
        <begin position="1"/>
        <end position="190"/>
    </location>
</feature>
<feature type="transmembrane region" description="Helical" evidence="1">
    <location>
        <begin position="10"/>
        <end position="30"/>
    </location>
</feature>
<dbReference type="EMBL" id="AE014075">
    <property type="protein sequence ID" value="AAN79254.1"/>
    <property type="status" value="ALT_INIT"/>
    <property type="molecule type" value="Genomic_DNA"/>
</dbReference>
<dbReference type="RefSeq" id="WP_001298627.1">
    <property type="nucleotide sequence ID" value="NZ_CP051263.1"/>
</dbReference>
<dbReference type="SMR" id="Q8FJV5"/>
<dbReference type="STRING" id="199310.c0781"/>
<dbReference type="KEGG" id="ecc:c0781"/>
<dbReference type="eggNOG" id="COG2156">
    <property type="taxonomic scope" value="Bacteria"/>
</dbReference>
<dbReference type="HOGENOM" id="CLU_077094_2_0_6"/>
<dbReference type="Proteomes" id="UP000001410">
    <property type="component" value="Chromosome"/>
</dbReference>
<dbReference type="GO" id="GO:0005886">
    <property type="term" value="C:plasma membrane"/>
    <property type="evidence" value="ECO:0007669"/>
    <property type="project" value="UniProtKB-SubCell"/>
</dbReference>
<dbReference type="GO" id="GO:0005524">
    <property type="term" value="F:ATP binding"/>
    <property type="evidence" value="ECO:0007669"/>
    <property type="project" value="UniProtKB-UniRule"/>
</dbReference>
<dbReference type="GO" id="GO:0008556">
    <property type="term" value="F:P-type potassium transmembrane transporter activity"/>
    <property type="evidence" value="ECO:0007669"/>
    <property type="project" value="InterPro"/>
</dbReference>
<dbReference type="HAMAP" id="MF_00276">
    <property type="entry name" value="KdpC"/>
    <property type="match status" value="1"/>
</dbReference>
<dbReference type="InterPro" id="IPR003820">
    <property type="entry name" value="KdpC"/>
</dbReference>
<dbReference type="NCBIfam" id="TIGR00681">
    <property type="entry name" value="kdpC"/>
    <property type="match status" value="1"/>
</dbReference>
<dbReference type="NCBIfam" id="NF001454">
    <property type="entry name" value="PRK00315.1"/>
    <property type="match status" value="1"/>
</dbReference>
<dbReference type="PANTHER" id="PTHR30042">
    <property type="entry name" value="POTASSIUM-TRANSPORTING ATPASE C CHAIN"/>
    <property type="match status" value="1"/>
</dbReference>
<dbReference type="PANTHER" id="PTHR30042:SF2">
    <property type="entry name" value="POTASSIUM-TRANSPORTING ATPASE KDPC SUBUNIT"/>
    <property type="match status" value="1"/>
</dbReference>
<dbReference type="Pfam" id="PF02669">
    <property type="entry name" value="KdpC"/>
    <property type="match status" value="1"/>
</dbReference>
<dbReference type="PIRSF" id="PIRSF001296">
    <property type="entry name" value="K_ATPase_KdpC"/>
    <property type="match status" value="1"/>
</dbReference>
<proteinExistence type="inferred from homology"/>
<reference key="1">
    <citation type="journal article" date="2002" name="Proc. Natl. Acad. Sci. U.S.A.">
        <title>Extensive mosaic structure revealed by the complete genome sequence of uropathogenic Escherichia coli.</title>
        <authorList>
            <person name="Welch R.A."/>
            <person name="Burland V."/>
            <person name="Plunkett G. III"/>
            <person name="Redford P."/>
            <person name="Roesch P."/>
            <person name="Rasko D."/>
            <person name="Buckles E.L."/>
            <person name="Liou S.-R."/>
            <person name="Boutin A."/>
            <person name="Hackett J."/>
            <person name="Stroud D."/>
            <person name="Mayhew G.F."/>
            <person name="Rose D.J."/>
            <person name="Zhou S."/>
            <person name="Schwartz D.C."/>
            <person name="Perna N.T."/>
            <person name="Mobley H.L.T."/>
            <person name="Donnenberg M.S."/>
            <person name="Blattner F.R."/>
        </authorList>
    </citation>
    <scope>NUCLEOTIDE SEQUENCE [LARGE SCALE GENOMIC DNA]</scope>
    <source>
        <strain>CFT073 / ATCC 700928 / UPEC</strain>
    </source>
</reference>